<protein>
    <recommendedName>
        <fullName>Mitochondrial F-box protein MFB1</fullName>
    </recommendedName>
</protein>
<reference key="1">
    <citation type="journal article" date="1997" name="Nature">
        <title>The nucleotide sequence of Saccharomyces cerevisiae chromosome IV.</title>
        <authorList>
            <person name="Jacq C."/>
            <person name="Alt-Moerbe J."/>
            <person name="Andre B."/>
            <person name="Arnold W."/>
            <person name="Bahr A."/>
            <person name="Ballesta J.P.G."/>
            <person name="Bargues M."/>
            <person name="Baron L."/>
            <person name="Becker A."/>
            <person name="Biteau N."/>
            <person name="Bloecker H."/>
            <person name="Blugeon C."/>
            <person name="Boskovic J."/>
            <person name="Brandt P."/>
            <person name="Brueckner M."/>
            <person name="Buitrago M.J."/>
            <person name="Coster F."/>
            <person name="Delaveau T."/>
            <person name="del Rey F."/>
            <person name="Dujon B."/>
            <person name="Eide L.G."/>
            <person name="Garcia-Cantalejo J.M."/>
            <person name="Goffeau A."/>
            <person name="Gomez-Peris A."/>
            <person name="Granotier C."/>
            <person name="Hanemann V."/>
            <person name="Hankeln T."/>
            <person name="Hoheisel J.D."/>
            <person name="Jaeger W."/>
            <person name="Jimenez A."/>
            <person name="Jonniaux J.-L."/>
            <person name="Kraemer C."/>
            <person name="Kuester H."/>
            <person name="Laamanen P."/>
            <person name="Legros Y."/>
            <person name="Louis E.J."/>
            <person name="Moeller-Rieker S."/>
            <person name="Monnet A."/>
            <person name="Moro M."/>
            <person name="Mueller-Auer S."/>
            <person name="Nussbaumer B."/>
            <person name="Paricio N."/>
            <person name="Paulin L."/>
            <person name="Perea J."/>
            <person name="Perez-Alonso M."/>
            <person name="Perez-Ortin J.E."/>
            <person name="Pohl T.M."/>
            <person name="Prydz H."/>
            <person name="Purnelle B."/>
            <person name="Rasmussen S.W."/>
            <person name="Remacha M.A."/>
            <person name="Revuelta J.L."/>
            <person name="Rieger M."/>
            <person name="Salom D."/>
            <person name="Saluz H.P."/>
            <person name="Saiz J.E."/>
            <person name="Saren A.-M."/>
            <person name="Schaefer M."/>
            <person name="Scharfe M."/>
            <person name="Schmidt E.R."/>
            <person name="Schneider C."/>
            <person name="Scholler P."/>
            <person name="Schwarz S."/>
            <person name="Soler-Mira A."/>
            <person name="Urrestarazu L.A."/>
            <person name="Verhasselt P."/>
            <person name="Vissers S."/>
            <person name="Voet M."/>
            <person name="Volckaert G."/>
            <person name="Wagner G."/>
            <person name="Wambutt R."/>
            <person name="Wedler E."/>
            <person name="Wedler H."/>
            <person name="Woelfl S."/>
            <person name="Harris D.E."/>
            <person name="Bowman S."/>
            <person name="Brown D."/>
            <person name="Churcher C.M."/>
            <person name="Connor R."/>
            <person name="Dedman K."/>
            <person name="Gentles S."/>
            <person name="Hamlin N."/>
            <person name="Hunt S."/>
            <person name="Jones L."/>
            <person name="McDonald S."/>
            <person name="Murphy L.D."/>
            <person name="Niblett D."/>
            <person name="Odell C."/>
            <person name="Oliver K."/>
            <person name="Rajandream M.A."/>
            <person name="Richards C."/>
            <person name="Shore L."/>
            <person name="Walsh S.V."/>
            <person name="Barrell B.G."/>
            <person name="Dietrich F.S."/>
            <person name="Mulligan J.T."/>
            <person name="Allen E."/>
            <person name="Araujo R."/>
            <person name="Aviles E."/>
            <person name="Berno A."/>
            <person name="Carpenter J."/>
            <person name="Chen E."/>
            <person name="Cherry J.M."/>
            <person name="Chung E."/>
            <person name="Duncan M."/>
            <person name="Hunicke-Smith S."/>
            <person name="Hyman R.W."/>
            <person name="Komp C."/>
            <person name="Lashkari D."/>
            <person name="Lew H."/>
            <person name="Lin D."/>
            <person name="Mosedale D."/>
            <person name="Nakahara K."/>
            <person name="Namath A."/>
            <person name="Oefner P."/>
            <person name="Oh C."/>
            <person name="Petel F.X."/>
            <person name="Roberts D."/>
            <person name="Schramm S."/>
            <person name="Schroeder M."/>
            <person name="Shogren T."/>
            <person name="Shroff N."/>
            <person name="Winant A."/>
            <person name="Yelton M.A."/>
            <person name="Botstein D."/>
            <person name="Davis R.W."/>
            <person name="Johnston M."/>
            <person name="Andrews S."/>
            <person name="Brinkman R."/>
            <person name="Cooper J."/>
            <person name="Ding H."/>
            <person name="Du Z."/>
            <person name="Favello A."/>
            <person name="Fulton L."/>
            <person name="Gattung S."/>
            <person name="Greco T."/>
            <person name="Hallsworth K."/>
            <person name="Hawkins J."/>
            <person name="Hillier L.W."/>
            <person name="Jier M."/>
            <person name="Johnson D."/>
            <person name="Johnston L."/>
            <person name="Kirsten J."/>
            <person name="Kucaba T."/>
            <person name="Langston Y."/>
            <person name="Latreille P."/>
            <person name="Le T."/>
            <person name="Mardis E."/>
            <person name="Menezes S."/>
            <person name="Miller N."/>
            <person name="Nhan M."/>
            <person name="Pauley A."/>
            <person name="Peluso D."/>
            <person name="Rifkin L."/>
            <person name="Riles L."/>
            <person name="Taich A."/>
            <person name="Trevaskis E."/>
            <person name="Vignati D."/>
            <person name="Wilcox L."/>
            <person name="Wohldman P."/>
            <person name="Vaudin M."/>
            <person name="Wilson R."/>
            <person name="Waterston R."/>
            <person name="Albermann K."/>
            <person name="Hani J."/>
            <person name="Heumann K."/>
            <person name="Kleine K."/>
            <person name="Mewes H.-W."/>
            <person name="Zollner A."/>
            <person name="Zaccaria P."/>
        </authorList>
    </citation>
    <scope>NUCLEOTIDE SEQUENCE [LARGE SCALE GENOMIC DNA]</scope>
    <source>
        <strain>ATCC 204508 / S288c</strain>
    </source>
</reference>
<reference key="2">
    <citation type="journal article" date="2014" name="G3 (Bethesda)">
        <title>The reference genome sequence of Saccharomyces cerevisiae: Then and now.</title>
        <authorList>
            <person name="Engel S.R."/>
            <person name="Dietrich F.S."/>
            <person name="Fisk D.G."/>
            <person name="Binkley G."/>
            <person name="Balakrishnan R."/>
            <person name="Costanzo M.C."/>
            <person name="Dwight S.S."/>
            <person name="Hitz B.C."/>
            <person name="Karra K."/>
            <person name="Nash R.S."/>
            <person name="Weng S."/>
            <person name="Wong E.D."/>
            <person name="Lloyd P."/>
            <person name="Skrzypek M.S."/>
            <person name="Miyasato S.R."/>
            <person name="Simison M."/>
            <person name="Cherry J.M."/>
        </authorList>
    </citation>
    <scope>GENOME REANNOTATION</scope>
    <source>
        <strain>ATCC 204508 / S288c</strain>
    </source>
</reference>
<reference key="3">
    <citation type="journal article" date="2003" name="Nature">
        <title>Global analysis of protein localization in budding yeast.</title>
        <authorList>
            <person name="Huh W.-K."/>
            <person name="Falvo J.V."/>
            <person name="Gerke L.C."/>
            <person name="Carroll A.S."/>
            <person name="Howson R.W."/>
            <person name="Weissman J.S."/>
            <person name="O'Shea E.K."/>
        </authorList>
    </citation>
    <scope>SUBCELLULAR LOCATION [LARGE SCALE ANALYSIS]</scope>
</reference>
<reference key="4">
    <citation type="journal article" date="2003" name="Nature">
        <title>Global analysis of protein expression in yeast.</title>
        <authorList>
            <person name="Ghaemmaghami S."/>
            <person name="Huh W.-K."/>
            <person name="Bower K."/>
            <person name="Howson R.W."/>
            <person name="Belle A."/>
            <person name="Dephoure N."/>
            <person name="O'Shea E.K."/>
            <person name="Weissman J.S."/>
        </authorList>
    </citation>
    <scope>LEVEL OF PROTEIN EXPRESSION [LARGE SCALE ANALYSIS]</scope>
</reference>
<reference key="5">
    <citation type="journal article" date="2008" name="Mol. Cell. Proteomics">
        <title>A multidimensional chromatography technology for in-depth phosphoproteome analysis.</title>
        <authorList>
            <person name="Albuquerque C.P."/>
            <person name="Smolka M.B."/>
            <person name="Payne S.H."/>
            <person name="Bafna V."/>
            <person name="Eng J."/>
            <person name="Zhou H."/>
        </authorList>
    </citation>
    <scope>IDENTIFICATION BY MASS SPECTROMETRY [LARGE SCALE ANALYSIS]</scope>
</reference>
<organism>
    <name type="scientific">Saccharomyces cerevisiae (strain ATCC 204508 / S288c)</name>
    <name type="common">Baker's yeast</name>
    <dbReference type="NCBI Taxonomy" id="559292"/>
    <lineage>
        <taxon>Eukaryota</taxon>
        <taxon>Fungi</taxon>
        <taxon>Dikarya</taxon>
        <taxon>Ascomycota</taxon>
        <taxon>Saccharomycotina</taxon>
        <taxon>Saccharomycetes</taxon>
        <taxon>Saccharomycetales</taxon>
        <taxon>Saccharomycetaceae</taxon>
        <taxon>Saccharomyces</taxon>
    </lineage>
</organism>
<name>MFB1_YEAST</name>
<evidence type="ECO:0000255" key="1">
    <source>
        <dbReference type="PROSITE-ProRule" id="PRU00080"/>
    </source>
</evidence>
<evidence type="ECO:0000256" key="2">
    <source>
        <dbReference type="SAM" id="MobiDB-lite"/>
    </source>
</evidence>
<evidence type="ECO:0000269" key="3">
    <source>
    </source>
</evidence>
<evidence type="ECO:0000269" key="4">
    <source>
    </source>
</evidence>
<gene>
    <name type="primary">MFB1</name>
    <name type="ordered locus">YDR219C</name>
</gene>
<comment type="subcellular location">
    <subcellularLocation>
        <location evidence="3">Mitochondrion</location>
    </subcellularLocation>
</comment>
<comment type="miscellaneous">
    <text evidence="4">Present with 1360 molecules/cell in log phase SD medium.</text>
</comment>
<proteinExistence type="evidence at protein level"/>
<keyword id="KW-0496">Mitochondrion</keyword>
<keyword id="KW-1185">Reference proteome</keyword>
<accession>Q04922</accession>
<accession>D6VSK2</accession>
<dbReference type="EMBL" id="Z48612">
    <property type="protein sequence ID" value="CAA88499.1"/>
    <property type="molecule type" value="Genomic_DNA"/>
</dbReference>
<dbReference type="EMBL" id="BK006938">
    <property type="protein sequence ID" value="DAA12062.1"/>
    <property type="molecule type" value="Genomic_DNA"/>
</dbReference>
<dbReference type="PIR" id="S59426">
    <property type="entry name" value="S59426"/>
</dbReference>
<dbReference type="RefSeq" id="NP_010505.3">
    <property type="nucleotide sequence ID" value="NM_001180527.3"/>
</dbReference>
<dbReference type="BioGRID" id="32272">
    <property type="interactions" value="86"/>
</dbReference>
<dbReference type="DIP" id="DIP-6353N"/>
<dbReference type="FunCoup" id="Q04922">
    <property type="interactions" value="116"/>
</dbReference>
<dbReference type="IntAct" id="Q04922">
    <property type="interactions" value="7"/>
</dbReference>
<dbReference type="MINT" id="Q04922"/>
<dbReference type="STRING" id="4932.YDR219C"/>
<dbReference type="GlyGen" id="Q04922">
    <property type="glycosylation" value="1 site, 1 O-linked glycan (1 site)"/>
</dbReference>
<dbReference type="iPTMnet" id="Q04922"/>
<dbReference type="PaxDb" id="4932-YDR219C"/>
<dbReference type="PeptideAtlas" id="Q04922"/>
<dbReference type="EnsemblFungi" id="YDR219C_mRNA">
    <property type="protein sequence ID" value="YDR219C"/>
    <property type="gene ID" value="YDR219C"/>
</dbReference>
<dbReference type="GeneID" id="851805"/>
<dbReference type="KEGG" id="sce:YDR219C"/>
<dbReference type="AGR" id="SGD:S000002627"/>
<dbReference type="SGD" id="S000002627">
    <property type="gene designation" value="MFB1"/>
</dbReference>
<dbReference type="VEuPathDB" id="FungiDB:YDR219C"/>
<dbReference type="eggNOG" id="ENOG502S5PF">
    <property type="taxonomic scope" value="Eukaryota"/>
</dbReference>
<dbReference type="HOGENOM" id="CLU_667626_0_0_1"/>
<dbReference type="InParanoid" id="Q04922"/>
<dbReference type="OMA" id="EIERHYP"/>
<dbReference type="OrthoDB" id="3219396at2759"/>
<dbReference type="BioCyc" id="YEAST:G3O-29800-MONOMER"/>
<dbReference type="BioGRID-ORCS" id="851805">
    <property type="hits" value="0 hits in 10 CRISPR screens"/>
</dbReference>
<dbReference type="PRO" id="PR:Q04922"/>
<dbReference type="Proteomes" id="UP000002311">
    <property type="component" value="Chromosome IV"/>
</dbReference>
<dbReference type="RNAct" id="Q04922">
    <property type="molecule type" value="protein"/>
</dbReference>
<dbReference type="GO" id="GO:0005739">
    <property type="term" value="C:mitochondrion"/>
    <property type="evidence" value="ECO:0007669"/>
    <property type="project" value="UniProtKB-SubCell"/>
</dbReference>
<dbReference type="GO" id="GO:0019005">
    <property type="term" value="C:SCF ubiquitin ligase complex"/>
    <property type="evidence" value="ECO:0000247"/>
    <property type="project" value="SGD"/>
</dbReference>
<dbReference type="GO" id="GO:0048312">
    <property type="term" value="P:intracellular distribution of mitochondria"/>
    <property type="evidence" value="ECO:0000315"/>
    <property type="project" value="SGD"/>
</dbReference>
<dbReference type="GO" id="GO:0007005">
    <property type="term" value="P:mitochondrion organization"/>
    <property type="evidence" value="ECO:0000315"/>
    <property type="project" value="SGD"/>
</dbReference>
<dbReference type="GO" id="GO:0031146">
    <property type="term" value="P:SCF-dependent proteasomal ubiquitin-dependent protein catabolic process"/>
    <property type="evidence" value="ECO:0000247"/>
    <property type="project" value="SGD"/>
</dbReference>
<dbReference type="CDD" id="cd22146">
    <property type="entry name" value="F-box_ScMFB1-like"/>
    <property type="match status" value="1"/>
</dbReference>
<dbReference type="Gene3D" id="1.20.1280.50">
    <property type="match status" value="1"/>
</dbReference>
<dbReference type="InterPro" id="IPR036047">
    <property type="entry name" value="F-box-like_dom_sf"/>
</dbReference>
<dbReference type="InterPro" id="IPR001810">
    <property type="entry name" value="F-box_dom"/>
</dbReference>
<dbReference type="InterPro" id="IPR052301">
    <property type="entry name" value="SCF_F-box/WD-repeat"/>
</dbReference>
<dbReference type="PANTHER" id="PTHR14381">
    <property type="entry name" value="DACTYLIN"/>
    <property type="match status" value="1"/>
</dbReference>
<dbReference type="PANTHER" id="PTHR14381:SF1">
    <property type="entry name" value="F-BOX_WD REPEAT-CONTAINING PROTEIN 4"/>
    <property type="match status" value="1"/>
</dbReference>
<dbReference type="Pfam" id="PF12937">
    <property type="entry name" value="F-box-like"/>
    <property type="match status" value="1"/>
</dbReference>
<dbReference type="SMART" id="SM00256">
    <property type="entry name" value="FBOX"/>
    <property type="match status" value="1"/>
</dbReference>
<dbReference type="SUPFAM" id="SSF81383">
    <property type="entry name" value="F-box domain"/>
    <property type="match status" value="1"/>
</dbReference>
<dbReference type="PROSITE" id="PS50181">
    <property type="entry name" value="FBOX"/>
    <property type="match status" value="1"/>
</dbReference>
<sequence>MTLFSCSVQMPLEERSLTNLPLNLLFRILSHLDMNDLQNIGKTCTLLRMLANENIVYRNAVIGSNGNMWWTKNVLVDVFDVLNFNRKAMKTLNSHNISLVASLRNVQRKYKLGVIDPARKTISYRTNEVESKEKGSVKDLNMDLNEPTEITREQIAHTAILQGMNQFIELNDKAFRTHSADSDDTYIEENNGEIHSLHGLEKNTTFEEDLVKKPPFIPSPTFSNYSRSSTNSVFSSSSPKLLDDDWNNITMDFTKSRDPDYKEMTPTSTESSDSITRLRKSNKVKDKAELFEKLIFRDSRPLKTKKKDNPRLKLSSSLSANDEDFRKIISPPSDILPKVGRRSVSRGYLEEIERHYPDFNGETTNPLAIKRVNSTKIANYEQLIIKENSSNCKGITEKNDENKFQRSHTSPVIELSKPHQRSKLKAVVTDGNKICYRKIELDNPSGSNTNDHVIKRLDANTDFNI</sequence>
<feature type="chain" id="PRO_0000253803" description="Mitochondrial F-box protein MFB1">
    <location>
        <begin position="1"/>
        <end position="465"/>
    </location>
</feature>
<feature type="domain" description="F-box" evidence="1">
    <location>
        <begin position="14"/>
        <end position="60"/>
    </location>
</feature>
<feature type="region of interest" description="Disordered" evidence="2">
    <location>
        <begin position="253"/>
        <end position="279"/>
    </location>
</feature>
<feature type="compositionally biased region" description="Basic and acidic residues" evidence="2">
    <location>
        <begin position="254"/>
        <end position="263"/>
    </location>
</feature>
<feature type="compositionally biased region" description="Polar residues" evidence="2">
    <location>
        <begin position="265"/>
        <end position="275"/>
    </location>
</feature>